<reference key="1">
    <citation type="submission" date="2007-05" db="EMBL/GenBank/DDBJ databases">
        <title>Complete sequence of Geobacter uraniireducens Rf4.</title>
        <authorList>
            <consortium name="US DOE Joint Genome Institute"/>
            <person name="Copeland A."/>
            <person name="Lucas S."/>
            <person name="Lapidus A."/>
            <person name="Barry K."/>
            <person name="Detter J.C."/>
            <person name="Glavina del Rio T."/>
            <person name="Hammon N."/>
            <person name="Israni S."/>
            <person name="Dalin E."/>
            <person name="Tice H."/>
            <person name="Pitluck S."/>
            <person name="Chertkov O."/>
            <person name="Brettin T."/>
            <person name="Bruce D."/>
            <person name="Han C."/>
            <person name="Schmutz J."/>
            <person name="Larimer F."/>
            <person name="Land M."/>
            <person name="Hauser L."/>
            <person name="Kyrpides N."/>
            <person name="Mikhailova N."/>
            <person name="Shelobolina E."/>
            <person name="Aklujkar M."/>
            <person name="Lovley D."/>
            <person name="Richardson P."/>
        </authorList>
    </citation>
    <scope>NUCLEOTIDE SEQUENCE [LARGE SCALE GENOMIC DNA]</scope>
    <source>
        <strain>ATCC BAA-1134 / JCM 13001 / Rf4</strain>
    </source>
</reference>
<feature type="chain" id="PRO_1000075029" description="5'-nucleotidase SurE">
    <location>
        <begin position="1"/>
        <end position="248"/>
    </location>
</feature>
<feature type="binding site" evidence="1">
    <location>
        <position position="8"/>
    </location>
    <ligand>
        <name>a divalent metal cation</name>
        <dbReference type="ChEBI" id="CHEBI:60240"/>
    </ligand>
</feature>
<feature type="binding site" evidence="1">
    <location>
        <position position="9"/>
    </location>
    <ligand>
        <name>a divalent metal cation</name>
        <dbReference type="ChEBI" id="CHEBI:60240"/>
    </ligand>
</feature>
<feature type="binding site" evidence="1">
    <location>
        <position position="39"/>
    </location>
    <ligand>
        <name>a divalent metal cation</name>
        <dbReference type="ChEBI" id="CHEBI:60240"/>
    </ligand>
</feature>
<feature type="binding site" evidence="1">
    <location>
        <position position="91"/>
    </location>
    <ligand>
        <name>a divalent metal cation</name>
        <dbReference type="ChEBI" id="CHEBI:60240"/>
    </ligand>
</feature>
<accession>A5G4S8</accession>
<organism>
    <name type="scientific">Geotalea uraniireducens (strain Rf4)</name>
    <name type="common">Geobacter uraniireducens</name>
    <dbReference type="NCBI Taxonomy" id="351605"/>
    <lineage>
        <taxon>Bacteria</taxon>
        <taxon>Pseudomonadati</taxon>
        <taxon>Thermodesulfobacteriota</taxon>
        <taxon>Desulfuromonadia</taxon>
        <taxon>Geobacterales</taxon>
        <taxon>Geobacteraceae</taxon>
        <taxon>Geotalea</taxon>
    </lineage>
</organism>
<gene>
    <name evidence="1" type="primary">surE</name>
    <name type="ordered locus">Gura_2619</name>
</gene>
<name>SURE_GEOUR</name>
<sequence>MKILLTNDDGVRAPGLAALAEAMGAIGEVYVVAPDREQSAVGHALTLHHPLRATRIENNIFAVDGTPTDCVNLGIHSLLSFKPDIVVSGINRGGNLGDDITYSGTVSAAMEATLMGIPAIAVSLVTQNDGGNYSAAAAFVVKLAGIVSREGLPDDTFLNVNVPDLPAEQLRHPVITTQGKRSYEGTIVDKVDPRGRSYYWIGTVDLNFSDIEGSDYNAVSRGHISITPLHLDLTNYNSLAALKRWDLT</sequence>
<proteinExistence type="inferred from homology"/>
<evidence type="ECO:0000255" key="1">
    <source>
        <dbReference type="HAMAP-Rule" id="MF_00060"/>
    </source>
</evidence>
<dbReference type="EC" id="3.1.3.5" evidence="1"/>
<dbReference type="EMBL" id="CP000698">
    <property type="protein sequence ID" value="ABQ26796.1"/>
    <property type="molecule type" value="Genomic_DNA"/>
</dbReference>
<dbReference type="RefSeq" id="WP_011939473.1">
    <property type="nucleotide sequence ID" value="NC_009483.1"/>
</dbReference>
<dbReference type="SMR" id="A5G4S8"/>
<dbReference type="STRING" id="351605.Gura_2619"/>
<dbReference type="KEGG" id="gur:Gura_2619"/>
<dbReference type="HOGENOM" id="CLU_045192_1_2_7"/>
<dbReference type="OrthoDB" id="9780815at2"/>
<dbReference type="Proteomes" id="UP000006695">
    <property type="component" value="Chromosome"/>
</dbReference>
<dbReference type="GO" id="GO:0005737">
    <property type="term" value="C:cytoplasm"/>
    <property type="evidence" value="ECO:0007669"/>
    <property type="project" value="UniProtKB-SubCell"/>
</dbReference>
<dbReference type="GO" id="GO:0008254">
    <property type="term" value="F:3'-nucleotidase activity"/>
    <property type="evidence" value="ECO:0007669"/>
    <property type="project" value="TreeGrafter"/>
</dbReference>
<dbReference type="GO" id="GO:0008253">
    <property type="term" value="F:5'-nucleotidase activity"/>
    <property type="evidence" value="ECO:0007669"/>
    <property type="project" value="UniProtKB-UniRule"/>
</dbReference>
<dbReference type="GO" id="GO:0004309">
    <property type="term" value="F:exopolyphosphatase activity"/>
    <property type="evidence" value="ECO:0007669"/>
    <property type="project" value="TreeGrafter"/>
</dbReference>
<dbReference type="GO" id="GO:0046872">
    <property type="term" value="F:metal ion binding"/>
    <property type="evidence" value="ECO:0007669"/>
    <property type="project" value="UniProtKB-UniRule"/>
</dbReference>
<dbReference type="GO" id="GO:0000166">
    <property type="term" value="F:nucleotide binding"/>
    <property type="evidence" value="ECO:0007669"/>
    <property type="project" value="UniProtKB-KW"/>
</dbReference>
<dbReference type="FunFam" id="3.40.1210.10:FF:000001">
    <property type="entry name" value="5'/3'-nucleotidase SurE"/>
    <property type="match status" value="1"/>
</dbReference>
<dbReference type="Gene3D" id="3.40.1210.10">
    <property type="entry name" value="Survival protein SurE-like phosphatase/nucleotidase"/>
    <property type="match status" value="1"/>
</dbReference>
<dbReference type="HAMAP" id="MF_00060">
    <property type="entry name" value="SurE"/>
    <property type="match status" value="1"/>
</dbReference>
<dbReference type="InterPro" id="IPR030048">
    <property type="entry name" value="SurE"/>
</dbReference>
<dbReference type="InterPro" id="IPR002828">
    <property type="entry name" value="SurE-like_Pase/nucleotidase"/>
</dbReference>
<dbReference type="InterPro" id="IPR036523">
    <property type="entry name" value="SurE-like_sf"/>
</dbReference>
<dbReference type="NCBIfam" id="NF001489">
    <property type="entry name" value="PRK00346.1-3"/>
    <property type="match status" value="1"/>
</dbReference>
<dbReference type="NCBIfam" id="NF001490">
    <property type="entry name" value="PRK00346.1-4"/>
    <property type="match status" value="1"/>
</dbReference>
<dbReference type="NCBIfam" id="NF001492">
    <property type="entry name" value="PRK00346.2-2"/>
    <property type="match status" value="1"/>
</dbReference>
<dbReference type="NCBIfam" id="TIGR00087">
    <property type="entry name" value="surE"/>
    <property type="match status" value="1"/>
</dbReference>
<dbReference type="PANTHER" id="PTHR30457">
    <property type="entry name" value="5'-NUCLEOTIDASE SURE"/>
    <property type="match status" value="1"/>
</dbReference>
<dbReference type="PANTHER" id="PTHR30457:SF12">
    <property type="entry name" value="5'_3'-NUCLEOTIDASE SURE"/>
    <property type="match status" value="1"/>
</dbReference>
<dbReference type="Pfam" id="PF01975">
    <property type="entry name" value="SurE"/>
    <property type="match status" value="1"/>
</dbReference>
<dbReference type="SUPFAM" id="SSF64167">
    <property type="entry name" value="SurE-like"/>
    <property type="match status" value="1"/>
</dbReference>
<keyword id="KW-0963">Cytoplasm</keyword>
<keyword id="KW-0378">Hydrolase</keyword>
<keyword id="KW-0479">Metal-binding</keyword>
<keyword id="KW-0547">Nucleotide-binding</keyword>
<keyword id="KW-1185">Reference proteome</keyword>
<comment type="function">
    <text evidence="1">Nucleotidase that shows phosphatase activity on nucleoside 5'-monophosphates.</text>
</comment>
<comment type="catalytic activity">
    <reaction evidence="1">
        <text>a ribonucleoside 5'-phosphate + H2O = a ribonucleoside + phosphate</text>
        <dbReference type="Rhea" id="RHEA:12484"/>
        <dbReference type="ChEBI" id="CHEBI:15377"/>
        <dbReference type="ChEBI" id="CHEBI:18254"/>
        <dbReference type="ChEBI" id="CHEBI:43474"/>
        <dbReference type="ChEBI" id="CHEBI:58043"/>
        <dbReference type="EC" id="3.1.3.5"/>
    </reaction>
</comment>
<comment type="cofactor">
    <cofactor evidence="1">
        <name>a divalent metal cation</name>
        <dbReference type="ChEBI" id="CHEBI:60240"/>
    </cofactor>
    <text evidence="1">Binds 1 divalent metal cation per subunit.</text>
</comment>
<comment type="subcellular location">
    <subcellularLocation>
        <location evidence="1">Cytoplasm</location>
    </subcellularLocation>
</comment>
<comment type="similarity">
    <text evidence="1">Belongs to the SurE nucleotidase family.</text>
</comment>
<protein>
    <recommendedName>
        <fullName evidence="1">5'-nucleotidase SurE</fullName>
        <ecNumber evidence="1">3.1.3.5</ecNumber>
    </recommendedName>
    <alternativeName>
        <fullName evidence="1">Nucleoside 5'-monophosphate phosphohydrolase</fullName>
    </alternativeName>
</protein>